<comment type="function">
    <text evidence="1">Involved in transcription antitermination. Required for transcription of ribosomal RNA (rRNA) genes. Binds specifically to the boxA antiterminator sequence of the ribosomal RNA (rrn) operons.</text>
</comment>
<comment type="similarity">
    <text evidence="1">Belongs to the NusB family.</text>
</comment>
<protein>
    <recommendedName>
        <fullName evidence="1">Transcription antitermination protein NusB</fullName>
    </recommendedName>
    <alternativeName>
        <fullName evidence="1">Antitermination factor NusB</fullName>
    </alternativeName>
</protein>
<gene>
    <name evidence="1" type="primary">nusB</name>
    <name type="ordered locus">RF_1119</name>
</gene>
<sequence>MSSNKINKKSIARIAAVQAIYQNILQNNDDMDDIMQNVLSFYQNNNSTTALPENLKISLSISHFKMLVKSVFENINKLDEIIDNHLTNDKDPAHMPILLRALLRVSICELLFCPTTPAKVVINEYTDIANDMLNEHEIGFVNSILDKIAQENNKIS</sequence>
<organism>
    <name type="scientific">Rickettsia felis (strain ATCC VR-1525 / URRWXCal2)</name>
    <name type="common">Rickettsia azadi</name>
    <dbReference type="NCBI Taxonomy" id="315456"/>
    <lineage>
        <taxon>Bacteria</taxon>
        <taxon>Pseudomonadati</taxon>
        <taxon>Pseudomonadota</taxon>
        <taxon>Alphaproteobacteria</taxon>
        <taxon>Rickettsiales</taxon>
        <taxon>Rickettsiaceae</taxon>
        <taxon>Rickettsieae</taxon>
        <taxon>Rickettsia</taxon>
        <taxon>spotted fever group</taxon>
    </lineage>
</organism>
<accession>Q4UKG1</accession>
<dbReference type="EMBL" id="CP000053">
    <property type="protein sequence ID" value="AAY61970.1"/>
    <property type="molecule type" value="Genomic_DNA"/>
</dbReference>
<dbReference type="SMR" id="Q4UKG1"/>
<dbReference type="STRING" id="315456.RF_1119"/>
<dbReference type="KEGG" id="rfe:RF_1119"/>
<dbReference type="eggNOG" id="COG0781">
    <property type="taxonomic scope" value="Bacteria"/>
</dbReference>
<dbReference type="HOGENOM" id="CLU_087843_4_3_5"/>
<dbReference type="OrthoDB" id="9797817at2"/>
<dbReference type="Proteomes" id="UP000008548">
    <property type="component" value="Chromosome"/>
</dbReference>
<dbReference type="GO" id="GO:0005829">
    <property type="term" value="C:cytosol"/>
    <property type="evidence" value="ECO:0007669"/>
    <property type="project" value="TreeGrafter"/>
</dbReference>
<dbReference type="GO" id="GO:0003723">
    <property type="term" value="F:RNA binding"/>
    <property type="evidence" value="ECO:0007669"/>
    <property type="project" value="UniProtKB-UniRule"/>
</dbReference>
<dbReference type="GO" id="GO:0006353">
    <property type="term" value="P:DNA-templated transcription termination"/>
    <property type="evidence" value="ECO:0007669"/>
    <property type="project" value="UniProtKB-UniRule"/>
</dbReference>
<dbReference type="GO" id="GO:0031564">
    <property type="term" value="P:transcription antitermination"/>
    <property type="evidence" value="ECO:0007669"/>
    <property type="project" value="UniProtKB-KW"/>
</dbReference>
<dbReference type="CDD" id="cd00619">
    <property type="entry name" value="Terminator_NusB"/>
    <property type="match status" value="1"/>
</dbReference>
<dbReference type="Gene3D" id="1.10.940.10">
    <property type="entry name" value="NusB-like"/>
    <property type="match status" value="1"/>
</dbReference>
<dbReference type="HAMAP" id="MF_00073">
    <property type="entry name" value="NusB"/>
    <property type="match status" value="1"/>
</dbReference>
<dbReference type="InterPro" id="IPR035926">
    <property type="entry name" value="NusB-like_sf"/>
</dbReference>
<dbReference type="InterPro" id="IPR011605">
    <property type="entry name" value="NusB_fam"/>
</dbReference>
<dbReference type="InterPro" id="IPR006027">
    <property type="entry name" value="NusB_RsmB_TIM44"/>
</dbReference>
<dbReference type="NCBIfam" id="TIGR01951">
    <property type="entry name" value="nusB"/>
    <property type="match status" value="1"/>
</dbReference>
<dbReference type="PANTHER" id="PTHR11078:SF3">
    <property type="entry name" value="ANTITERMINATION NUSB DOMAIN-CONTAINING PROTEIN"/>
    <property type="match status" value="1"/>
</dbReference>
<dbReference type="PANTHER" id="PTHR11078">
    <property type="entry name" value="N UTILIZATION SUBSTANCE PROTEIN B-RELATED"/>
    <property type="match status" value="1"/>
</dbReference>
<dbReference type="Pfam" id="PF01029">
    <property type="entry name" value="NusB"/>
    <property type="match status" value="1"/>
</dbReference>
<dbReference type="SUPFAM" id="SSF48013">
    <property type="entry name" value="NusB-like"/>
    <property type="match status" value="1"/>
</dbReference>
<proteinExistence type="inferred from homology"/>
<reference key="1">
    <citation type="journal article" date="2005" name="PLoS Biol.">
        <title>The genome sequence of Rickettsia felis identifies the first putative conjugative plasmid in an obligate intracellular parasite.</title>
        <authorList>
            <person name="Ogata H."/>
            <person name="Renesto P."/>
            <person name="Audic S."/>
            <person name="Robert C."/>
            <person name="Blanc G."/>
            <person name="Fournier P.-E."/>
            <person name="Parinello H."/>
            <person name="Claverie J.-M."/>
            <person name="Raoult D."/>
        </authorList>
    </citation>
    <scope>NUCLEOTIDE SEQUENCE [LARGE SCALE GENOMIC DNA]</scope>
    <source>
        <strain>ATCC VR-1525 / URRWXCal2</strain>
    </source>
</reference>
<evidence type="ECO:0000255" key="1">
    <source>
        <dbReference type="HAMAP-Rule" id="MF_00073"/>
    </source>
</evidence>
<keyword id="KW-0694">RNA-binding</keyword>
<keyword id="KW-0804">Transcription</keyword>
<keyword id="KW-0889">Transcription antitermination</keyword>
<keyword id="KW-0805">Transcription regulation</keyword>
<feature type="chain" id="PRO_0000265581" description="Transcription antitermination protein NusB">
    <location>
        <begin position="1"/>
        <end position="156"/>
    </location>
</feature>
<name>NUSB_RICFE</name>